<accession>Q5VUE5</accession>
<accession>A1L4N2</accession>
<accession>Q5VUE4</accession>
<dbReference type="EMBL" id="AL590115">
    <property type="status" value="NOT_ANNOTATED_CDS"/>
    <property type="molecule type" value="Genomic_DNA"/>
</dbReference>
<dbReference type="EMBL" id="BC038214">
    <property type="status" value="NOT_ANNOTATED_CDS"/>
    <property type="molecule type" value="mRNA"/>
</dbReference>
<dbReference type="EMBL" id="BC130608">
    <property type="protein sequence ID" value="AAI30609.1"/>
    <property type="molecule type" value="mRNA"/>
</dbReference>
<dbReference type="EMBL" id="BC130634">
    <property type="protein sequence ID" value="AAI30635.1"/>
    <property type="molecule type" value="mRNA"/>
</dbReference>
<dbReference type="CCDS" id="CCDS44290.1"/>
<dbReference type="RefSeq" id="NP_001019765.1">
    <property type="nucleotide sequence ID" value="NM_001024594.3"/>
</dbReference>
<dbReference type="BioGRID" id="132826">
    <property type="interactions" value="2"/>
</dbReference>
<dbReference type="FunCoup" id="Q5VUE5">
    <property type="interactions" value="2"/>
</dbReference>
<dbReference type="STRING" id="9606.ENSP00000356363"/>
<dbReference type="GlyGen" id="Q5VUE5">
    <property type="glycosylation" value="1 site"/>
</dbReference>
<dbReference type="iPTMnet" id="Q5VUE5"/>
<dbReference type="PhosphoSitePlus" id="Q5VUE5"/>
<dbReference type="BioMuta" id="C1orf53"/>
<dbReference type="jPOST" id="Q5VUE5"/>
<dbReference type="MassIVE" id="Q5VUE5"/>
<dbReference type="PaxDb" id="9606-ENSP00000356363"/>
<dbReference type="PeptideAtlas" id="Q5VUE5"/>
<dbReference type="ProteomicsDB" id="65416"/>
<dbReference type="Pumba" id="Q5VUE5"/>
<dbReference type="Antibodypedia" id="55946">
    <property type="antibodies" value="60 antibodies from 9 providers"/>
</dbReference>
<dbReference type="DNASU" id="388722"/>
<dbReference type="Ensembl" id="ENST00000367393.8">
    <property type="protein sequence ID" value="ENSP00000356363.3"/>
    <property type="gene ID" value="ENSG00000203724.11"/>
</dbReference>
<dbReference type="GeneID" id="388722"/>
<dbReference type="KEGG" id="hsa:388722"/>
<dbReference type="MANE-Select" id="ENST00000367393.8">
    <property type="protein sequence ID" value="ENSP00000356363.3"/>
    <property type="RefSeq nucleotide sequence ID" value="NM_001024594.3"/>
    <property type="RefSeq protein sequence ID" value="NP_001019765.1"/>
</dbReference>
<dbReference type="UCSC" id="uc001guh.4">
    <property type="organism name" value="human"/>
</dbReference>
<dbReference type="AGR" id="HGNC:30003"/>
<dbReference type="CTD" id="388722"/>
<dbReference type="GeneCards" id="C1orf53"/>
<dbReference type="HGNC" id="HGNC:30003">
    <property type="gene designation" value="C1orf53"/>
</dbReference>
<dbReference type="HPA" id="ENSG00000203724">
    <property type="expression patterns" value="Tissue enhanced (liver)"/>
</dbReference>
<dbReference type="neXtProt" id="NX_Q5VUE5"/>
<dbReference type="OpenTargets" id="ENSG00000203724"/>
<dbReference type="PharmGKB" id="PA142672504"/>
<dbReference type="VEuPathDB" id="HostDB:ENSG00000203724"/>
<dbReference type="eggNOG" id="ENOG502S6IY">
    <property type="taxonomic scope" value="Eukaryota"/>
</dbReference>
<dbReference type="GeneTree" id="ENSGT00390000016548"/>
<dbReference type="HOGENOM" id="CLU_141359_0_0_1"/>
<dbReference type="InParanoid" id="Q5VUE5"/>
<dbReference type="OMA" id="CSVARED"/>
<dbReference type="OrthoDB" id="274765at2759"/>
<dbReference type="PAN-GO" id="Q5VUE5">
    <property type="GO annotations" value="0 GO annotations based on evolutionary models"/>
</dbReference>
<dbReference type="PhylomeDB" id="Q5VUE5"/>
<dbReference type="TreeFam" id="TF313973"/>
<dbReference type="PathwayCommons" id="Q5VUE5"/>
<dbReference type="BioGRID-ORCS" id="388722">
    <property type="hits" value="11 hits in 1139 CRISPR screens"/>
</dbReference>
<dbReference type="GenomeRNAi" id="388722"/>
<dbReference type="Pharos" id="Q5VUE5">
    <property type="development level" value="Tdark"/>
</dbReference>
<dbReference type="PRO" id="PR:Q5VUE5"/>
<dbReference type="Proteomes" id="UP000005640">
    <property type="component" value="Chromosome 1"/>
</dbReference>
<dbReference type="RNAct" id="Q5VUE5">
    <property type="molecule type" value="protein"/>
</dbReference>
<dbReference type="Bgee" id="ENSG00000203724">
    <property type="expression patterns" value="Expressed in primordial germ cell in gonad and 134 other cell types or tissues"/>
</dbReference>
<dbReference type="ExpressionAtlas" id="Q5VUE5">
    <property type="expression patterns" value="baseline and differential"/>
</dbReference>
<dbReference type="GO" id="GO:0005739">
    <property type="term" value="C:mitochondrion"/>
    <property type="evidence" value="ECO:0006056"/>
    <property type="project" value="FlyBase"/>
</dbReference>
<dbReference type="InterPro" id="IPR040807">
    <property type="entry name" value="DUF5522"/>
</dbReference>
<dbReference type="PANTHER" id="PTHR21037">
    <property type="entry name" value="39S RIBOSOMAL PROTEIN L14, MITOCHONDRIAL"/>
    <property type="match status" value="1"/>
</dbReference>
<dbReference type="PANTHER" id="PTHR21037:SF2">
    <property type="entry name" value="SIMILAR TO NOVEL PROTEIN"/>
    <property type="match status" value="1"/>
</dbReference>
<dbReference type="Pfam" id="PF17653">
    <property type="entry name" value="DUF5522"/>
    <property type="match status" value="1"/>
</dbReference>
<protein>
    <recommendedName>
        <fullName>Uncharacterized protein C1orf53</fullName>
    </recommendedName>
</protein>
<gene>
    <name type="primary">C1orf53</name>
</gene>
<organism>
    <name type="scientific">Homo sapiens</name>
    <name type="common">Human</name>
    <dbReference type="NCBI Taxonomy" id="9606"/>
    <lineage>
        <taxon>Eukaryota</taxon>
        <taxon>Metazoa</taxon>
        <taxon>Chordata</taxon>
        <taxon>Craniata</taxon>
        <taxon>Vertebrata</taxon>
        <taxon>Euteleostomi</taxon>
        <taxon>Mammalia</taxon>
        <taxon>Eutheria</taxon>
        <taxon>Euarchontoglires</taxon>
        <taxon>Primates</taxon>
        <taxon>Haplorrhini</taxon>
        <taxon>Catarrhini</taxon>
        <taxon>Hominidae</taxon>
        <taxon>Homo</taxon>
    </lineage>
</organism>
<evidence type="ECO:0000269" key="1">
    <source>
    </source>
</evidence>
<evidence type="ECO:0007744" key="2">
    <source>
    </source>
</evidence>
<comment type="tissue specificity">
    <text evidence="1">Expressed in retina and retinoblastoma.</text>
</comment>
<sequence>MAARQIWARTGAALCRQPSAAPPPAPLWVRAGFRQQLSLTLCPANEGNCGGSAPSTPGRPERAARPSVSEELTAAERQIAELHAAACAAGQLNYVDPATGYVVLTQIAHLQRGECCGSACRHCPYGQVNVKDPSKKKQFNSYFYV</sequence>
<name>CA053_HUMAN</name>
<keyword id="KW-0597">Phosphoprotein</keyword>
<keyword id="KW-1267">Proteomics identification</keyword>
<keyword id="KW-1185">Reference proteome</keyword>
<proteinExistence type="evidence at protein level"/>
<feature type="chain" id="PRO_0000271012" description="Uncharacterized protein C1orf53">
    <location>
        <begin position="1"/>
        <end position="145"/>
    </location>
</feature>
<feature type="modified residue" description="Phosphoserine" evidence="2">
    <location>
        <position position="67"/>
    </location>
</feature>
<reference key="1">
    <citation type="journal article" date="2006" name="Nature">
        <title>The DNA sequence and biological annotation of human chromosome 1.</title>
        <authorList>
            <person name="Gregory S.G."/>
            <person name="Barlow K.F."/>
            <person name="McLay K.E."/>
            <person name="Kaul R."/>
            <person name="Swarbreck D."/>
            <person name="Dunham A."/>
            <person name="Scott C.E."/>
            <person name="Howe K.L."/>
            <person name="Woodfine K."/>
            <person name="Spencer C.C.A."/>
            <person name="Jones M.C."/>
            <person name="Gillson C."/>
            <person name="Searle S."/>
            <person name="Zhou Y."/>
            <person name="Kokocinski F."/>
            <person name="McDonald L."/>
            <person name="Evans R."/>
            <person name="Phillips K."/>
            <person name="Atkinson A."/>
            <person name="Cooper R."/>
            <person name="Jones C."/>
            <person name="Hall R.E."/>
            <person name="Andrews T.D."/>
            <person name="Lloyd C."/>
            <person name="Ainscough R."/>
            <person name="Almeida J.P."/>
            <person name="Ambrose K.D."/>
            <person name="Anderson F."/>
            <person name="Andrew R.W."/>
            <person name="Ashwell R.I.S."/>
            <person name="Aubin K."/>
            <person name="Babbage A.K."/>
            <person name="Bagguley C.L."/>
            <person name="Bailey J."/>
            <person name="Beasley H."/>
            <person name="Bethel G."/>
            <person name="Bird C.P."/>
            <person name="Bray-Allen S."/>
            <person name="Brown J.Y."/>
            <person name="Brown A.J."/>
            <person name="Buckley D."/>
            <person name="Burton J."/>
            <person name="Bye J."/>
            <person name="Carder C."/>
            <person name="Chapman J.C."/>
            <person name="Clark S.Y."/>
            <person name="Clarke G."/>
            <person name="Clee C."/>
            <person name="Cobley V."/>
            <person name="Collier R.E."/>
            <person name="Corby N."/>
            <person name="Coville G.J."/>
            <person name="Davies J."/>
            <person name="Deadman R."/>
            <person name="Dunn M."/>
            <person name="Earthrowl M."/>
            <person name="Ellington A.G."/>
            <person name="Errington H."/>
            <person name="Frankish A."/>
            <person name="Frankland J."/>
            <person name="French L."/>
            <person name="Garner P."/>
            <person name="Garnett J."/>
            <person name="Gay L."/>
            <person name="Ghori M.R.J."/>
            <person name="Gibson R."/>
            <person name="Gilby L.M."/>
            <person name="Gillett W."/>
            <person name="Glithero R.J."/>
            <person name="Grafham D.V."/>
            <person name="Griffiths C."/>
            <person name="Griffiths-Jones S."/>
            <person name="Grocock R."/>
            <person name="Hammond S."/>
            <person name="Harrison E.S.I."/>
            <person name="Hart E."/>
            <person name="Haugen E."/>
            <person name="Heath P.D."/>
            <person name="Holmes S."/>
            <person name="Holt K."/>
            <person name="Howden P.J."/>
            <person name="Hunt A.R."/>
            <person name="Hunt S.E."/>
            <person name="Hunter G."/>
            <person name="Isherwood J."/>
            <person name="James R."/>
            <person name="Johnson C."/>
            <person name="Johnson D."/>
            <person name="Joy A."/>
            <person name="Kay M."/>
            <person name="Kershaw J.K."/>
            <person name="Kibukawa M."/>
            <person name="Kimberley A.M."/>
            <person name="King A."/>
            <person name="Knights A.J."/>
            <person name="Lad H."/>
            <person name="Laird G."/>
            <person name="Lawlor S."/>
            <person name="Leongamornlert D.A."/>
            <person name="Lloyd D.M."/>
            <person name="Loveland J."/>
            <person name="Lovell J."/>
            <person name="Lush M.J."/>
            <person name="Lyne R."/>
            <person name="Martin S."/>
            <person name="Mashreghi-Mohammadi M."/>
            <person name="Matthews L."/>
            <person name="Matthews N.S.W."/>
            <person name="McLaren S."/>
            <person name="Milne S."/>
            <person name="Mistry S."/>
            <person name="Moore M.J.F."/>
            <person name="Nickerson T."/>
            <person name="O'Dell C.N."/>
            <person name="Oliver K."/>
            <person name="Palmeiri A."/>
            <person name="Palmer S.A."/>
            <person name="Parker A."/>
            <person name="Patel D."/>
            <person name="Pearce A.V."/>
            <person name="Peck A.I."/>
            <person name="Pelan S."/>
            <person name="Phelps K."/>
            <person name="Phillimore B.J."/>
            <person name="Plumb R."/>
            <person name="Rajan J."/>
            <person name="Raymond C."/>
            <person name="Rouse G."/>
            <person name="Saenphimmachak C."/>
            <person name="Sehra H.K."/>
            <person name="Sheridan E."/>
            <person name="Shownkeen R."/>
            <person name="Sims S."/>
            <person name="Skuce C.D."/>
            <person name="Smith M."/>
            <person name="Steward C."/>
            <person name="Subramanian S."/>
            <person name="Sycamore N."/>
            <person name="Tracey A."/>
            <person name="Tromans A."/>
            <person name="Van Helmond Z."/>
            <person name="Wall M."/>
            <person name="Wallis J.M."/>
            <person name="White S."/>
            <person name="Whitehead S.L."/>
            <person name="Wilkinson J.E."/>
            <person name="Willey D.L."/>
            <person name="Williams H."/>
            <person name="Wilming L."/>
            <person name="Wray P.W."/>
            <person name="Wu Z."/>
            <person name="Coulson A."/>
            <person name="Vaudin M."/>
            <person name="Sulston J.E."/>
            <person name="Durbin R.M."/>
            <person name="Hubbard T."/>
            <person name="Wooster R."/>
            <person name="Dunham I."/>
            <person name="Carter N.P."/>
            <person name="McVean G."/>
            <person name="Ross M.T."/>
            <person name="Harrow J."/>
            <person name="Olson M.V."/>
            <person name="Beck S."/>
            <person name="Rogers J."/>
            <person name="Bentley D.R."/>
        </authorList>
    </citation>
    <scope>NUCLEOTIDE SEQUENCE [LARGE SCALE GENOMIC DNA]</scope>
</reference>
<reference key="2">
    <citation type="journal article" date="2004" name="Genome Res.">
        <title>The status, quality, and expansion of the NIH full-length cDNA project: the Mammalian Gene Collection (MGC).</title>
        <authorList>
            <consortium name="The MGC Project Team"/>
        </authorList>
    </citation>
    <scope>NUCLEOTIDE SEQUENCE [LARGE SCALE MRNA]</scope>
    <source>
        <tissue>Brain</tissue>
    </source>
</reference>
<reference key="3">
    <citation type="journal article" date="2005" name="Oncogene">
        <title>KIF14 is a candidate oncogene in the 1q minimal region of genomic gain in multiple cancers.</title>
        <authorList>
            <person name="Corson T.W."/>
            <person name="Huang A."/>
            <person name="Tsao M.-S."/>
            <person name="Gallie B.L."/>
        </authorList>
    </citation>
    <scope>TISSUE SPECIFICITY</scope>
</reference>
<reference key="4">
    <citation type="journal article" date="2013" name="J. Proteome Res.">
        <title>Toward a comprehensive characterization of a human cancer cell phosphoproteome.</title>
        <authorList>
            <person name="Zhou H."/>
            <person name="Di Palma S."/>
            <person name="Preisinger C."/>
            <person name="Peng M."/>
            <person name="Polat A.N."/>
            <person name="Heck A.J."/>
            <person name="Mohammed S."/>
        </authorList>
    </citation>
    <scope>PHOSPHORYLATION [LARGE SCALE ANALYSIS] AT SER-67</scope>
    <scope>IDENTIFICATION BY MASS SPECTROMETRY [LARGE SCALE ANALYSIS]</scope>
    <source>
        <tissue>Cervix carcinoma</tissue>
    </source>
</reference>